<dbReference type="EC" id="2.7.2.1" evidence="1"/>
<dbReference type="EMBL" id="CP000612">
    <property type="protein sequence ID" value="ABO50611.1"/>
    <property type="molecule type" value="Genomic_DNA"/>
</dbReference>
<dbReference type="RefSeq" id="WP_011878417.1">
    <property type="nucleotide sequence ID" value="NC_009253.1"/>
</dbReference>
<dbReference type="SMR" id="A4J6A8"/>
<dbReference type="STRING" id="349161.Dred_2094"/>
<dbReference type="KEGG" id="drm:Dred_2094"/>
<dbReference type="eggNOG" id="COG0282">
    <property type="taxonomic scope" value="Bacteria"/>
</dbReference>
<dbReference type="HOGENOM" id="CLU_020352_0_1_9"/>
<dbReference type="OrthoDB" id="9802453at2"/>
<dbReference type="UniPathway" id="UPA00340">
    <property type="reaction ID" value="UER00458"/>
</dbReference>
<dbReference type="Proteomes" id="UP000001556">
    <property type="component" value="Chromosome"/>
</dbReference>
<dbReference type="GO" id="GO:0005737">
    <property type="term" value="C:cytoplasm"/>
    <property type="evidence" value="ECO:0007669"/>
    <property type="project" value="UniProtKB-SubCell"/>
</dbReference>
<dbReference type="GO" id="GO:0008776">
    <property type="term" value="F:acetate kinase activity"/>
    <property type="evidence" value="ECO:0007669"/>
    <property type="project" value="UniProtKB-UniRule"/>
</dbReference>
<dbReference type="GO" id="GO:0005524">
    <property type="term" value="F:ATP binding"/>
    <property type="evidence" value="ECO:0007669"/>
    <property type="project" value="UniProtKB-KW"/>
</dbReference>
<dbReference type="GO" id="GO:0000287">
    <property type="term" value="F:magnesium ion binding"/>
    <property type="evidence" value="ECO:0007669"/>
    <property type="project" value="UniProtKB-UniRule"/>
</dbReference>
<dbReference type="GO" id="GO:0006083">
    <property type="term" value="P:acetate metabolic process"/>
    <property type="evidence" value="ECO:0007669"/>
    <property type="project" value="TreeGrafter"/>
</dbReference>
<dbReference type="GO" id="GO:0006085">
    <property type="term" value="P:acetyl-CoA biosynthetic process"/>
    <property type="evidence" value="ECO:0007669"/>
    <property type="project" value="UniProtKB-UniRule"/>
</dbReference>
<dbReference type="CDD" id="cd24010">
    <property type="entry name" value="ASKHA_NBD_AcK_PK"/>
    <property type="match status" value="1"/>
</dbReference>
<dbReference type="Gene3D" id="3.30.420.40">
    <property type="match status" value="2"/>
</dbReference>
<dbReference type="HAMAP" id="MF_00020">
    <property type="entry name" value="Acetate_kinase"/>
    <property type="match status" value="1"/>
</dbReference>
<dbReference type="InterPro" id="IPR004372">
    <property type="entry name" value="Ac/propionate_kinase"/>
</dbReference>
<dbReference type="InterPro" id="IPR000890">
    <property type="entry name" value="Aliphatic_acid_kin_short-chain"/>
</dbReference>
<dbReference type="InterPro" id="IPR023865">
    <property type="entry name" value="Aliphatic_acid_kinase_CS"/>
</dbReference>
<dbReference type="InterPro" id="IPR043129">
    <property type="entry name" value="ATPase_NBD"/>
</dbReference>
<dbReference type="NCBIfam" id="TIGR00016">
    <property type="entry name" value="ackA"/>
    <property type="match status" value="1"/>
</dbReference>
<dbReference type="PANTHER" id="PTHR21060">
    <property type="entry name" value="ACETATE KINASE"/>
    <property type="match status" value="1"/>
</dbReference>
<dbReference type="PANTHER" id="PTHR21060:SF15">
    <property type="entry name" value="ACETATE KINASE-RELATED"/>
    <property type="match status" value="1"/>
</dbReference>
<dbReference type="Pfam" id="PF00871">
    <property type="entry name" value="Acetate_kinase"/>
    <property type="match status" value="1"/>
</dbReference>
<dbReference type="PIRSF" id="PIRSF000722">
    <property type="entry name" value="Acetate_prop_kin"/>
    <property type="match status" value="1"/>
</dbReference>
<dbReference type="PRINTS" id="PR00471">
    <property type="entry name" value="ACETATEKNASE"/>
</dbReference>
<dbReference type="SUPFAM" id="SSF53067">
    <property type="entry name" value="Actin-like ATPase domain"/>
    <property type="match status" value="2"/>
</dbReference>
<dbReference type="PROSITE" id="PS01075">
    <property type="entry name" value="ACETATE_KINASE_1"/>
    <property type="match status" value="1"/>
</dbReference>
<dbReference type="PROSITE" id="PS01076">
    <property type="entry name" value="ACETATE_KINASE_2"/>
    <property type="match status" value="1"/>
</dbReference>
<comment type="function">
    <text evidence="1">Catalyzes the formation of acetyl phosphate from acetate and ATP. Can also catalyze the reverse reaction.</text>
</comment>
<comment type="catalytic activity">
    <reaction evidence="1">
        <text>acetate + ATP = acetyl phosphate + ADP</text>
        <dbReference type="Rhea" id="RHEA:11352"/>
        <dbReference type="ChEBI" id="CHEBI:22191"/>
        <dbReference type="ChEBI" id="CHEBI:30089"/>
        <dbReference type="ChEBI" id="CHEBI:30616"/>
        <dbReference type="ChEBI" id="CHEBI:456216"/>
        <dbReference type="EC" id="2.7.2.1"/>
    </reaction>
</comment>
<comment type="cofactor">
    <cofactor evidence="1">
        <name>Mg(2+)</name>
        <dbReference type="ChEBI" id="CHEBI:18420"/>
    </cofactor>
    <cofactor evidence="1">
        <name>Mn(2+)</name>
        <dbReference type="ChEBI" id="CHEBI:29035"/>
    </cofactor>
    <text evidence="1">Mg(2+). Can also accept Mn(2+).</text>
</comment>
<comment type="pathway">
    <text evidence="1">Metabolic intermediate biosynthesis; acetyl-CoA biosynthesis; acetyl-CoA from acetate: step 1/2.</text>
</comment>
<comment type="subunit">
    <text evidence="1">Homodimer.</text>
</comment>
<comment type="subcellular location">
    <subcellularLocation>
        <location evidence="1">Cytoplasm</location>
    </subcellularLocation>
</comment>
<comment type="similarity">
    <text evidence="1">Belongs to the acetokinase family.</text>
</comment>
<reference key="1">
    <citation type="submission" date="2007-03" db="EMBL/GenBank/DDBJ databases">
        <title>Complete sequence of Desulfotomaculum reducens MI-1.</title>
        <authorList>
            <consortium name="US DOE Joint Genome Institute"/>
            <person name="Copeland A."/>
            <person name="Lucas S."/>
            <person name="Lapidus A."/>
            <person name="Barry K."/>
            <person name="Detter J.C."/>
            <person name="Glavina del Rio T."/>
            <person name="Hammon N."/>
            <person name="Israni S."/>
            <person name="Dalin E."/>
            <person name="Tice H."/>
            <person name="Pitluck S."/>
            <person name="Sims D."/>
            <person name="Brettin T."/>
            <person name="Bruce D."/>
            <person name="Han C."/>
            <person name="Tapia R."/>
            <person name="Schmutz J."/>
            <person name="Larimer F."/>
            <person name="Land M."/>
            <person name="Hauser L."/>
            <person name="Kyrpides N."/>
            <person name="Kim E."/>
            <person name="Tebo B.M."/>
            <person name="Richardson P."/>
        </authorList>
    </citation>
    <scope>NUCLEOTIDE SEQUENCE [LARGE SCALE GENOMIC DNA]</scope>
    <source>
        <strain>ATCC BAA-1160 / DSM 100696 / MI-1</strain>
    </source>
</reference>
<organism>
    <name type="scientific">Desulforamulus reducens (strain ATCC BAA-1160 / DSM 100696 / MI-1)</name>
    <name type="common">Desulfotomaculum reducens</name>
    <dbReference type="NCBI Taxonomy" id="349161"/>
    <lineage>
        <taxon>Bacteria</taxon>
        <taxon>Bacillati</taxon>
        <taxon>Bacillota</taxon>
        <taxon>Clostridia</taxon>
        <taxon>Eubacteriales</taxon>
        <taxon>Peptococcaceae</taxon>
        <taxon>Desulforamulus</taxon>
    </lineage>
</organism>
<sequence length="396" mass="42883">MLVLVVNCGSSSIKYKLMDMEQESVLLSGLSERIGIAGSRIKQENNKGEELVLEQDLPDHKAALETILKCITDAKYGAIKDTAEIKAVGHRVVHGGEKFNKSVVIDAELMKVLEEMSELAPLHNPPNIIGIKTCQELMPHAAQVAVFDTAFHSAMPKHAYTYAVPYEYYEKYKIRRYGFHGTSHKFVSHRAAEILGKPVEDLKIIVCHLGNGSSISAVGNGVSQDTSMGFTPLPGLPMGTRTGDMDPAIVPFLMEKEQLGVNEIGNVLNKKSGVLGVSGISSDFRDLEDAASKGNERAELALNMFAYGIIKYIGAYTAALGGLDAVVFTGGIGENSKTMRAKVLNGLAYTGLQIDEEKNNTRGKEVIVSKPGAPFVAMVVPTNEELMIARETKELV</sequence>
<accession>A4J6A8</accession>
<feature type="chain" id="PRO_1000070995" description="Acetate kinase">
    <location>
        <begin position="1"/>
        <end position="396"/>
    </location>
</feature>
<feature type="active site" description="Proton donor/acceptor" evidence="1">
    <location>
        <position position="148"/>
    </location>
</feature>
<feature type="binding site" evidence="1">
    <location>
        <position position="7"/>
    </location>
    <ligand>
        <name>Mg(2+)</name>
        <dbReference type="ChEBI" id="CHEBI:18420"/>
    </ligand>
</feature>
<feature type="binding site" evidence="1">
    <location>
        <position position="14"/>
    </location>
    <ligand>
        <name>ATP</name>
        <dbReference type="ChEBI" id="CHEBI:30616"/>
    </ligand>
</feature>
<feature type="binding site" evidence="1">
    <location>
        <position position="91"/>
    </location>
    <ligand>
        <name>substrate</name>
    </ligand>
</feature>
<feature type="binding site" evidence="1">
    <location>
        <begin position="208"/>
        <end position="212"/>
    </location>
    <ligand>
        <name>ATP</name>
        <dbReference type="ChEBI" id="CHEBI:30616"/>
    </ligand>
</feature>
<feature type="binding site" evidence="1">
    <location>
        <begin position="283"/>
        <end position="285"/>
    </location>
    <ligand>
        <name>ATP</name>
        <dbReference type="ChEBI" id="CHEBI:30616"/>
    </ligand>
</feature>
<feature type="binding site" evidence="1">
    <location>
        <begin position="331"/>
        <end position="335"/>
    </location>
    <ligand>
        <name>ATP</name>
        <dbReference type="ChEBI" id="CHEBI:30616"/>
    </ligand>
</feature>
<feature type="binding site" evidence="1">
    <location>
        <position position="384"/>
    </location>
    <ligand>
        <name>Mg(2+)</name>
        <dbReference type="ChEBI" id="CHEBI:18420"/>
    </ligand>
</feature>
<feature type="site" description="Transition state stabilizer" evidence="1">
    <location>
        <position position="180"/>
    </location>
</feature>
<feature type="site" description="Transition state stabilizer" evidence="1">
    <location>
        <position position="241"/>
    </location>
</feature>
<name>ACKA_DESRM</name>
<keyword id="KW-0067">ATP-binding</keyword>
<keyword id="KW-0963">Cytoplasm</keyword>
<keyword id="KW-0418">Kinase</keyword>
<keyword id="KW-0460">Magnesium</keyword>
<keyword id="KW-0479">Metal-binding</keyword>
<keyword id="KW-0547">Nucleotide-binding</keyword>
<keyword id="KW-1185">Reference proteome</keyword>
<keyword id="KW-0808">Transferase</keyword>
<gene>
    <name evidence="1" type="primary">ackA</name>
    <name type="ordered locus">Dred_2094</name>
</gene>
<evidence type="ECO:0000255" key="1">
    <source>
        <dbReference type="HAMAP-Rule" id="MF_00020"/>
    </source>
</evidence>
<protein>
    <recommendedName>
        <fullName evidence="1">Acetate kinase</fullName>
        <ecNumber evidence="1">2.7.2.1</ecNumber>
    </recommendedName>
    <alternativeName>
        <fullName evidence="1">Acetokinase</fullName>
    </alternativeName>
</protein>
<proteinExistence type="inferred from homology"/>